<geneLocation type="chloroplast"/>
<proteinExistence type="inferred from homology"/>
<organism>
    <name type="scientific">Idiospermum australiense</name>
    <name type="common">Ribbonwood tree</name>
    <name type="synonym">Calycanthus australiensis</name>
    <dbReference type="NCBI Taxonomy" id="13573"/>
    <lineage>
        <taxon>Eukaryota</taxon>
        <taxon>Viridiplantae</taxon>
        <taxon>Streptophyta</taxon>
        <taxon>Embryophyta</taxon>
        <taxon>Tracheophyta</taxon>
        <taxon>Spermatophyta</taxon>
        <taxon>Magnoliopsida</taxon>
        <taxon>Magnoliidae</taxon>
        <taxon>Laurales</taxon>
        <taxon>Calycanthaceae</taxon>
        <taxon>Idiospermoideae</taxon>
        <taxon>Idiospermum</taxon>
    </lineage>
</organism>
<accession>Q6QUK9</accession>
<reference key="1">
    <citation type="journal article" date="2004" name="Harv. Pap. Bot.">
        <title>Phylogenetics of Calycanthaceae based on molecular and morphological data, with special reference to divergent paralogs of the nrDNA ITS region.</title>
        <authorList>
            <person name="Li J."/>
            <person name="Ledger J."/>
            <person name="Ward T."/>
            <person name="Del Tredici P."/>
        </authorList>
    </citation>
    <scope>NUCLEOTIDE SEQUENCE [GENOMIC DNA]</scope>
</reference>
<gene>
    <name evidence="1" type="primary">matK</name>
</gene>
<protein>
    <recommendedName>
        <fullName evidence="1">Maturase K</fullName>
    </recommendedName>
    <alternativeName>
        <fullName evidence="1">Intron maturase</fullName>
    </alternativeName>
</protein>
<keyword id="KW-0150">Chloroplast</keyword>
<keyword id="KW-0507">mRNA processing</keyword>
<keyword id="KW-0934">Plastid</keyword>
<keyword id="KW-0694">RNA-binding</keyword>
<keyword id="KW-0819">tRNA processing</keyword>
<sequence length="505" mass="59382">MEELQGYLEIDGFRQHHFLYPLLLQEYIYALAHDHGLNGSILSEPMENFSHDNKSSSLIVKRLITRMHQQNHLIISVNDSNQKGFVGHNKNLYSQRISEGFAVIVEIPFSLQLVFSLEEKEIAKSHNSRSIHSIFPFFEDKLSHLNHVSNILIPYPIHPEILVQTLRCWIQDAPSLHLLRFFLHEYWNSNSLITLKKSISFFSKANQRLFLFLYNSHVYECESVFIFLRKQSSHLRSTFSGSFLERTHFYGKIEHLVVVLGNDFQKTLWLFKDPFMHYVRYQGKSILASRGTPFLMKKWKYHLVNFWQCHFYLWSQPDRIHINQLCNHSFYFLGYLSSVQLNSSVVRSQMLENSFLMDTAIKKFETIVPIIPLIGSLAKAKFCNVSGHPISKPFRTDLSDSEILNRFGRICKNLSHYHSGSSKKQSLYRIKFILRLSCARTLSRKHKSTVRAFLKRLGSELLEEFLTEEEQVLSLIFPRTPSHRPHRERIWYLDIICINDLANHE</sequence>
<feature type="chain" id="PRO_0000143432" description="Maturase K">
    <location>
        <begin position="1"/>
        <end position="505"/>
    </location>
</feature>
<name>MATK_IDIAU</name>
<dbReference type="EMBL" id="AY525342">
    <property type="protein sequence ID" value="AAS09909.1"/>
    <property type="molecule type" value="Genomic_DNA"/>
</dbReference>
<dbReference type="GO" id="GO:0009507">
    <property type="term" value="C:chloroplast"/>
    <property type="evidence" value="ECO:0007669"/>
    <property type="project" value="UniProtKB-SubCell"/>
</dbReference>
<dbReference type="GO" id="GO:0003723">
    <property type="term" value="F:RNA binding"/>
    <property type="evidence" value="ECO:0007669"/>
    <property type="project" value="UniProtKB-KW"/>
</dbReference>
<dbReference type="GO" id="GO:0006397">
    <property type="term" value="P:mRNA processing"/>
    <property type="evidence" value="ECO:0007669"/>
    <property type="project" value="UniProtKB-KW"/>
</dbReference>
<dbReference type="GO" id="GO:0008380">
    <property type="term" value="P:RNA splicing"/>
    <property type="evidence" value="ECO:0007669"/>
    <property type="project" value="UniProtKB-UniRule"/>
</dbReference>
<dbReference type="GO" id="GO:0008033">
    <property type="term" value="P:tRNA processing"/>
    <property type="evidence" value="ECO:0007669"/>
    <property type="project" value="UniProtKB-KW"/>
</dbReference>
<dbReference type="HAMAP" id="MF_01390">
    <property type="entry name" value="MatK"/>
    <property type="match status" value="1"/>
</dbReference>
<dbReference type="InterPro" id="IPR024937">
    <property type="entry name" value="Domain_X"/>
</dbReference>
<dbReference type="InterPro" id="IPR002866">
    <property type="entry name" value="Maturase_MatK"/>
</dbReference>
<dbReference type="InterPro" id="IPR024942">
    <property type="entry name" value="Maturase_MatK_N"/>
</dbReference>
<dbReference type="PANTHER" id="PTHR34811">
    <property type="entry name" value="MATURASE K"/>
    <property type="match status" value="1"/>
</dbReference>
<dbReference type="PANTHER" id="PTHR34811:SF1">
    <property type="entry name" value="MATURASE K"/>
    <property type="match status" value="1"/>
</dbReference>
<dbReference type="Pfam" id="PF01348">
    <property type="entry name" value="Intron_maturas2"/>
    <property type="match status" value="1"/>
</dbReference>
<dbReference type="Pfam" id="PF01824">
    <property type="entry name" value="MatK_N"/>
    <property type="match status" value="1"/>
</dbReference>
<comment type="function">
    <text evidence="1">Usually encoded in the trnK tRNA gene intron. Probably assists in splicing its own and other chloroplast group II introns.</text>
</comment>
<comment type="subcellular location">
    <subcellularLocation>
        <location>Plastid</location>
        <location>Chloroplast</location>
    </subcellularLocation>
</comment>
<comment type="similarity">
    <text evidence="1">Belongs to the intron maturase 2 family. MatK subfamily.</text>
</comment>
<evidence type="ECO:0000255" key="1">
    <source>
        <dbReference type="HAMAP-Rule" id="MF_01390"/>
    </source>
</evidence>